<organism>
    <name type="scientific">Conus emaciatus</name>
    <name type="common">False virgin cone</name>
    <dbReference type="NCBI Taxonomy" id="89442"/>
    <lineage>
        <taxon>Eukaryota</taxon>
        <taxon>Metazoa</taxon>
        <taxon>Spiralia</taxon>
        <taxon>Lophotrochozoa</taxon>
        <taxon>Mollusca</taxon>
        <taxon>Gastropoda</taxon>
        <taxon>Caenogastropoda</taxon>
        <taxon>Neogastropoda</taxon>
        <taxon>Conoidea</taxon>
        <taxon>Conidae</taxon>
        <taxon>Conus</taxon>
        <taxon>Virgiconus</taxon>
    </lineage>
</organism>
<name>CO2FA_CONEM</name>
<evidence type="ECO:0000250" key="1"/>
<evidence type="ECO:0000255" key="2"/>
<evidence type="ECO:0000305" key="3"/>
<protein>
    <recommendedName>
        <fullName>Conotoxin Ec15a</fullName>
    </recommendedName>
</protein>
<comment type="subcellular location">
    <subcellularLocation>
        <location evidence="1">Secreted</location>
    </subcellularLocation>
</comment>
<comment type="tissue specificity">
    <text>Expressed by the venom duct.</text>
</comment>
<comment type="domain">
    <text>The cysteine framework is XV (C-C-CC-C-C-C-C).</text>
</comment>
<comment type="PTM">
    <text evidence="1">Contains 4 disulfide bonds.</text>
</comment>
<comment type="similarity">
    <text evidence="3">Belongs to the conotoxin O2 superfamily.</text>
</comment>
<feature type="signal peptide" evidence="2">
    <location>
        <begin position="1"/>
        <end position="23"/>
    </location>
</feature>
<feature type="propeptide" id="PRO_0000392186" evidence="1">
    <location>
        <begin position="24"/>
        <end position="49"/>
    </location>
</feature>
<feature type="peptide" id="PRO_0000392187" description="Conotoxin Ec15a">
    <location>
        <begin position="50"/>
        <end position="86"/>
    </location>
</feature>
<feature type="modified residue" description="Pyrrolidone carboxylic acid" evidence="1">
    <location>
        <position position="50"/>
    </location>
</feature>
<keyword id="KW-1015">Disulfide bond</keyword>
<keyword id="KW-0873">Pyrrolidone carboxylic acid</keyword>
<keyword id="KW-0964">Secreted</keyword>
<keyword id="KW-0732">Signal</keyword>
<keyword id="KW-0800">Toxin</keyword>
<reference key="1">
    <citation type="submission" date="2006-04" db="EMBL/GenBank/DDBJ databases">
        <title>A novel class of conotoxin cDNAs with a distinctive cysteine arrangement.</title>
        <authorList>
            <person name="Jiang X."/>
            <person name="Pi C."/>
            <person name="Liu Y."/>
        </authorList>
    </citation>
    <scope>NUCLEOTIDE SEQUENCE [MRNA]</scope>
    <source>
        <tissue>Venom duct</tissue>
    </source>
</reference>
<sequence>MEKLTILILVATVLLAIQVLGQGEGEKPPKEWVQQYAAKRLWALMKGPRQCTPKDAPCDDNNQCCSGLECKCFNMPDCQSGSTCRV</sequence>
<proteinExistence type="evidence at transcript level"/>
<accession>B0KZ79</accession>
<dbReference type="EMBL" id="DQ512966">
    <property type="protein sequence ID" value="ABG01720.1"/>
    <property type="molecule type" value="mRNA"/>
</dbReference>
<dbReference type="SMR" id="B0KZ79"/>
<dbReference type="ConoServer" id="2759">
    <property type="toxin name" value="Ec15a precursor"/>
</dbReference>
<dbReference type="GO" id="GO:0005576">
    <property type="term" value="C:extracellular region"/>
    <property type="evidence" value="ECO:0007669"/>
    <property type="project" value="UniProtKB-SubCell"/>
</dbReference>
<dbReference type="GO" id="GO:0008200">
    <property type="term" value="F:ion channel inhibitor activity"/>
    <property type="evidence" value="ECO:0007669"/>
    <property type="project" value="InterPro"/>
</dbReference>
<dbReference type="GO" id="GO:0090729">
    <property type="term" value="F:toxin activity"/>
    <property type="evidence" value="ECO:0007669"/>
    <property type="project" value="UniProtKB-KW"/>
</dbReference>
<dbReference type="InterPro" id="IPR004214">
    <property type="entry name" value="Conotoxin"/>
</dbReference>
<dbReference type="Pfam" id="PF02950">
    <property type="entry name" value="Conotoxin"/>
    <property type="match status" value="1"/>
</dbReference>